<proteinExistence type="evidence at protein level"/>
<name>AQP6_RAT</name>
<dbReference type="EMBL" id="AF083879">
    <property type="protein sequence ID" value="AAD29856.1"/>
    <property type="molecule type" value="mRNA"/>
</dbReference>
<dbReference type="RefSeq" id="NP_071517.1">
    <property type="nucleotide sequence ID" value="NM_022181.2"/>
</dbReference>
<dbReference type="SMR" id="Q9WTY0"/>
<dbReference type="FunCoup" id="Q9WTY0">
    <property type="interactions" value="69"/>
</dbReference>
<dbReference type="STRING" id="10116.ENSRNOP00000071627"/>
<dbReference type="GlyCosmos" id="Q9WTY0">
    <property type="glycosylation" value="1 site, No reported glycans"/>
</dbReference>
<dbReference type="GlyGen" id="Q9WTY0">
    <property type="glycosylation" value="2 sites"/>
</dbReference>
<dbReference type="PhosphoSitePlus" id="Q9WTY0"/>
<dbReference type="PaxDb" id="10116-ENSRNOP00000000323"/>
<dbReference type="Ensembl" id="ENSRNOT00000098480.1">
    <property type="protein sequence ID" value="ENSRNOP00000092300.1"/>
    <property type="gene ID" value="ENSRNOG00000063448.1"/>
</dbReference>
<dbReference type="GeneID" id="29170"/>
<dbReference type="KEGG" id="rno:29170"/>
<dbReference type="UCSC" id="RGD:71100">
    <property type="organism name" value="rat"/>
</dbReference>
<dbReference type="AGR" id="RGD:71100"/>
<dbReference type="CTD" id="363"/>
<dbReference type="RGD" id="71100">
    <property type="gene designation" value="Aqp6"/>
</dbReference>
<dbReference type="VEuPathDB" id="HostDB:ENSRNOG00000053181"/>
<dbReference type="eggNOG" id="KOG0223">
    <property type="taxonomic scope" value="Eukaryota"/>
</dbReference>
<dbReference type="GeneTree" id="ENSGT00940000161949"/>
<dbReference type="HOGENOM" id="CLU_020019_3_3_1"/>
<dbReference type="InParanoid" id="Q9WTY0"/>
<dbReference type="OrthoDB" id="55280at9989"/>
<dbReference type="PhylomeDB" id="Q9WTY0"/>
<dbReference type="TreeFam" id="TF312940"/>
<dbReference type="PRO" id="PR:Q9WTY0"/>
<dbReference type="Proteomes" id="UP000002494">
    <property type="component" value="Chromosome 7"/>
</dbReference>
<dbReference type="Bgee" id="ENSRNOG00000053181">
    <property type="expression patterns" value="Expressed in kidney and 2 other cell types or tissues"/>
</dbReference>
<dbReference type="GO" id="GO:0030659">
    <property type="term" value="C:cytoplasmic vesicle membrane"/>
    <property type="evidence" value="ECO:0000314"/>
    <property type="project" value="UniProtKB"/>
</dbReference>
<dbReference type="GO" id="GO:0030658">
    <property type="term" value="C:transport vesicle membrane"/>
    <property type="evidence" value="ECO:0000304"/>
    <property type="project" value="Reactome"/>
</dbReference>
<dbReference type="GO" id="GO:0008519">
    <property type="term" value="F:ammonium channel activity"/>
    <property type="evidence" value="ECO:0000314"/>
    <property type="project" value="UniProtKB"/>
</dbReference>
<dbReference type="GO" id="GO:0035379">
    <property type="term" value="F:carbon dioxide transmembrane transporter activity"/>
    <property type="evidence" value="ECO:0000314"/>
    <property type="project" value="UniProtKB"/>
</dbReference>
<dbReference type="GO" id="GO:0005253">
    <property type="term" value="F:monoatomic anion channel activity"/>
    <property type="evidence" value="ECO:0000314"/>
    <property type="project" value="UniProtKB"/>
</dbReference>
<dbReference type="GO" id="GO:0015112">
    <property type="term" value="F:nitrate transmembrane transporter activity"/>
    <property type="evidence" value="ECO:0000315"/>
    <property type="project" value="RGD"/>
</dbReference>
<dbReference type="GO" id="GO:0061797">
    <property type="term" value="F:pH-gated chloride channel activity"/>
    <property type="evidence" value="ECO:0000314"/>
    <property type="project" value="UniProtKB"/>
</dbReference>
<dbReference type="GO" id="GO:0015250">
    <property type="term" value="F:water channel activity"/>
    <property type="evidence" value="ECO:0000314"/>
    <property type="project" value="UniProtKB"/>
</dbReference>
<dbReference type="GO" id="GO:0015706">
    <property type="term" value="P:nitrate transmembrane transport"/>
    <property type="evidence" value="ECO:0000315"/>
    <property type="project" value="RGD"/>
</dbReference>
<dbReference type="GO" id="GO:0042476">
    <property type="term" value="P:odontogenesis"/>
    <property type="evidence" value="ECO:0000266"/>
    <property type="project" value="RGD"/>
</dbReference>
<dbReference type="GO" id="GO:0003097">
    <property type="term" value="P:renal water transport"/>
    <property type="evidence" value="ECO:0000250"/>
    <property type="project" value="UniProtKB"/>
</dbReference>
<dbReference type="CDD" id="cd00333">
    <property type="entry name" value="MIP"/>
    <property type="match status" value="1"/>
</dbReference>
<dbReference type="FunFam" id="1.20.1080.10:FF:000003">
    <property type="entry name" value="Lens fiber major intrinsic"/>
    <property type="match status" value="1"/>
</dbReference>
<dbReference type="Gene3D" id="1.20.1080.10">
    <property type="entry name" value="Glycerol uptake facilitator protein"/>
    <property type="match status" value="1"/>
</dbReference>
<dbReference type="InterPro" id="IPR023271">
    <property type="entry name" value="Aquaporin-like"/>
</dbReference>
<dbReference type="InterPro" id="IPR023254">
    <property type="entry name" value="Aquaporin_6"/>
</dbReference>
<dbReference type="InterPro" id="IPR034294">
    <property type="entry name" value="Aquaporin_transptr"/>
</dbReference>
<dbReference type="InterPro" id="IPR000425">
    <property type="entry name" value="MIP"/>
</dbReference>
<dbReference type="InterPro" id="IPR022357">
    <property type="entry name" value="MIP_CS"/>
</dbReference>
<dbReference type="NCBIfam" id="TIGR00861">
    <property type="entry name" value="MIP"/>
    <property type="match status" value="1"/>
</dbReference>
<dbReference type="PANTHER" id="PTHR19139">
    <property type="entry name" value="AQUAPORIN TRANSPORTER"/>
    <property type="match status" value="1"/>
</dbReference>
<dbReference type="PANTHER" id="PTHR19139:SF113">
    <property type="entry name" value="AQUAPORIN-6"/>
    <property type="match status" value="1"/>
</dbReference>
<dbReference type="Pfam" id="PF00230">
    <property type="entry name" value="MIP"/>
    <property type="match status" value="1"/>
</dbReference>
<dbReference type="PRINTS" id="PR02018">
    <property type="entry name" value="AQUAPORIN6"/>
</dbReference>
<dbReference type="PRINTS" id="PR00783">
    <property type="entry name" value="MINTRINSICP"/>
</dbReference>
<dbReference type="SUPFAM" id="SSF81338">
    <property type="entry name" value="Aquaporin-like"/>
    <property type="match status" value="1"/>
</dbReference>
<dbReference type="PROSITE" id="PS00221">
    <property type="entry name" value="MIP"/>
    <property type="match status" value="1"/>
</dbReference>
<feature type="chain" id="PRO_0000063957" description="Aquaporin-6">
    <location>
        <begin position="1"/>
        <end position="276"/>
    </location>
</feature>
<feature type="topological domain" description="Cytoplasmic" evidence="1">
    <location>
        <begin position="1"/>
        <end position="22"/>
    </location>
</feature>
<feature type="transmembrane region" description="Helical" evidence="1">
    <location>
        <begin position="23"/>
        <end position="43"/>
    </location>
</feature>
<feature type="topological domain" description="Extracellular" evidence="1">
    <location>
        <begin position="44"/>
        <end position="51"/>
    </location>
</feature>
<feature type="transmembrane region" description="Helical" evidence="1">
    <location>
        <begin position="52"/>
        <end position="70"/>
    </location>
</feature>
<feature type="topological domain" description="Cytoplasmic" evidence="1">
    <location>
        <begin position="71"/>
        <end position="75"/>
    </location>
</feature>
<feature type="intramembrane region" description="Discontinuously helical" evidence="1">
    <location>
        <begin position="76"/>
        <end position="85"/>
    </location>
</feature>
<feature type="topological domain" description="Cytoplasmic" evidence="1">
    <location>
        <begin position="86"/>
        <end position="96"/>
    </location>
</feature>
<feature type="transmembrane region" description="Helical" evidence="1">
    <location>
        <begin position="97"/>
        <end position="118"/>
    </location>
</feature>
<feature type="topological domain" description="Extracellular" evidence="1">
    <location>
        <begin position="119"/>
        <end position="138"/>
    </location>
</feature>
<feature type="transmembrane region" description="Helical" evidence="1">
    <location>
        <begin position="139"/>
        <end position="159"/>
    </location>
</feature>
<feature type="topological domain" description="Cytoplasmic" evidence="1">
    <location>
        <begin position="160"/>
        <end position="165"/>
    </location>
</feature>
<feature type="transmembrane region" description="Helical" evidence="1">
    <location>
        <begin position="166"/>
        <end position="185"/>
    </location>
</feature>
<feature type="topological domain" description="Extracellular" evidence="1">
    <location>
        <begin position="186"/>
        <end position="189"/>
    </location>
</feature>
<feature type="intramembrane region" description="Discontinuously helical" evidence="1">
    <location>
        <begin position="190"/>
        <end position="202"/>
    </location>
</feature>
<feature type="topological domain" description="Extracellular" evidence="1">
    <location>
        <begin position="203"/>
        <end position="210"/>
    </location>
</feature>
<feature type="transmembrane region" description="Helical" evidence="1">
    <location>
        <begin position="211"/>
        <end position="231"/>
    </location>
</feature>
<feature type="topological domain" description="Cytoplasmic" evidence="1">
    <location>
        <begin position="232"/>
        <end position="276"/>
    </location>
</feature>
<feature type="short sequence motif" description="NPA 1" evidence="1">
    <location>
        <begin position="79"/>
        <end position="81"/>
    </location>
</feature>
<feature type="short sequence motif" description="NPA 2" evidence="1">
    <location>
        <begin position="193"/>
        <end position="195"/>
    </location>
</feature>
<feature type="glycosylation site" description="N-linked (GlcNAc...) asparagine" evidence="3">
    <location>
        <position position="134"/>
    </location>
</feature>
<feature type="mutagenesis site" description="Increased water channel activity." evidence="8">
    <original>N</original>
    <variation>G</variation>
    <location>
        <position position="60"/>
    </location>
</feature>
<feature type="mutagenesis site" description="Reduced selectivity for nitrate with respect to chloride." evidence="7">
    <original>T</original>
    <variation>I</variation>
    <location>
        <position position="63"/>
    </location>
</feature>
<feature type="mutagenesis site" description="Loss of chloride ion selectivity with respect to sodium." evidence="5">
    <original>K</original>
    <variation>E</variation>
    <location>
        <position position="72"/>
    </location>
</feature>
<feature type="mutagenesis site" description="No effect on chloride ion selectivity with respect to sodium." evidence="5">
    <original>K</original>
    <variation>H</variation>
    <location>
        <position position="72"/>
    </location>
</feature>
<comment type="function">
    <text evidence="5 6 7 8">Aquaporins form homotetrameric transmembrane channels, with each monomer independently mediating water transport across the plasma membrane along its osmotic gradient (PubMed:10647010, PubMed:12034750, PubMed:12177001). Unlike classical aquaporins, AQP6 is an intracellular channel with selective anion permeability, particularly for nitrate, and exhibits very low water permeability (PubMed:10647010, PubMed:12034750, PubMed:23485707). It may also facilitate the transport of gases, such as CO2 and NH4(+), as demonstrated in vitro (PubMed:23485707).</text>
</comment>
<comment type="catalytic activity">
    <reaction evidence="13">
        <text>nitrate(in) = nitrate(out)</text>
        <dbReference type="Rhea" id="RHEA:34923"/>
        <dbReference type="ChEBI" id="CHEBI:17632"/>
    </reaction>
</comment>
<comment type="catalytic activity">
    <reaction evidence="13">
        <text>iodide(out) = iodide(in)</text>
        <dbReference type="Rhea" id="RHEA:66324"/>
        <dbReference type="ChEBI" id="CHEBI:16382"/>
    </reaction>
</comment>
<comment type="catalytic activity">
    <reaction evidence="13">
        <text>bromide(in) = bromide(out)</text>
        <dbReference type="Rhea" id="RHEA:75383"/>
        <dbReference type="ChEBI" id="CHEBI:15858"/>
    </reaction>
</comment>
<comment type="catalytic activity">
    <reaction evidence="11 12">
        <text>chloride(in) = chloride(out)</text>
        <dbReference type="Rhea" id="RHEA:29823"/>
        <dbReference type="ChEBI" id="CHEBI:17996"/>
    </reaction>
</comment>
<comment type="catalytic activity">
    <reaction evidence="11 12">
        <text>Na(+)(in) = Na(+)(out)</text>
        <dbReference type="Rhea" id="RHEA:34963"/>
        <dbReference type="ChEBI" id="CHEBI:29101"/>
    </reaction>
</comment>
<comment type="catalytic activity">
    <reaction evidence="11">
        <text>H2O(in) = H2O(out)</text>
        <dbReference type="Rhea" id="RHEA:29667"/>
        <dbReference type="ChEBI" id="CHEBI:15377"/>
    </reaction>
</comment>
<comment type="catalytic activity">
    <reaction evidence="14">
        <text>CO2(out) = CO2(in)</text>
        <dbReference type="Rhea" id="RHEA:74891"/>
        <dbReference type="ChEBI" id="CHEBI:16526"/>
    </reaction>
</comment>
<comment type="catalytic activity">
    <reaction evidence="14">
        <text>NH4(+)(in) = NH4(+)(out)</text>
        <dbReference type="Rhea" id="RHEA:28747"/>
        <dbReference type="ChEBI" id="CHEBI:28938"/>
    </reaction>
</comment>
<comment type="activity regulation">
    <text evidence="5">Activated by mercury and pH-gated, anion permeability is observed at pH 5.5 and increases markedly at pH 4.0. Selectivity for chloride increases at low pH. The water channel activity is stimulated by mercury by opposition to other aquaporins.</text>
</comment>
<comment type="subunit">
    <text evidence="2">Homotetramer; each monomer provides an independent solute pore.</text>
</comment>
<comment type="subcellular location">
    <subcellularLocation>
        <location evidence="4 5">Cytoplasmic vesicle membrane</location>
        <topology evidence="3">Multi-pass membrane protein</topology>
    </subcellularLocation>
</comment>
<comment type="tissue specificity">
    <text evidence="4">Kidney.</text>
</comment>
<comment type="domain">
    <text evidence="1">Aquaporins contain two tandem repeats each containing three membrane-spanning domains and a pore-forming loop with the signature motif Asn-Pro-Ala (NPA).</text>
</comment>
<comment type="PTM">
    <text evidence="4">N-glycosylated.</text>
</comment>
<comment type="similarity">
    <text evidence="10">Belongs to the MIP/aquaporin (TC 1.A.8) family.</text>
</comment>
<sequence length="276" mass="28860">MEPGLCNRAYLLVGGLWTAISKALFAEFLATGLYVFFGVGSVLPWPVALPSVLQVAITFNLATATAVQISWKTSGAHANPAVTLAYLVGSHISLPRAVAYIAAQLAGATVGAALLYGVTPGGVRETLGVNVVHNSTSTGQAVAVELVLTLQLVLCVFASMDSRQTLGSPAAMIGTSVALGHLIGIYFTGCSMNPARSFGPAVIVGKFAVHWIFWVGPLTGAVLASLIYNFILFPDTKTVAQRLAILVGTTKVEKVVDLEPQKKESQTNSEDTEVSV</sequence>
<reference key="1">
    <citation type="journal article" date="1999" name="Proc. Natl. Acad. Sci. U.S.A.">
        <title>Aquaporin-6: an intracellular vesicle water channel protein in renal epithelia.</title>
        <authorList>
            <person name="Yasui M."/>
            <person name="Kwon T.H."/>
            <person name="Knepper M.A."/>
            <person name="Nielsen S."/>
            <person name="Agre P."/>
        </authorList>
    </citation>
    <scope>NUCLEOTIDE SEQUENCE [MRNA]</scope>
    <scope>SUBCELLULAR LOCATION</scope>
    <scope>GLYCOSYLATION</scope>
    <scope>TISSUE SPECIFICITY</scope>
</reference>
<reference key="2">
    <citation type="journal article" date="1999" name="Nature">
        <title>Rapid gating and anion permeability of an intracellular aquaporin.</title>
        <authorList>
            <person name="Yasui M."/>
            <person name="Hazama A."/>
            <person name="Kwon T.H."/>
            <person name="Nielsen S."/>
            <person name="Guggino W.B."/>
            <person name="Agre P."/>
        </authorList>
    </citation>
    <scope>FUNCTION</scope>
    <scope>TRANSPORTER ACTIVITY</scope>
    <scope>SUBCELLULAR LOCATION</scope>
    <scope>MUTAGENESIS OF LYS-72</scope>
</reference>
<reference key="3">
    <citation type="journal article" date="2002" name="J. Biol. Chem.">
        <title>Ion permeation of AQP6 water channel protein. Single channel recordings after Hg2+ activation.</title>
        <authorList>
            <person name="Hazama A."/>
            <person name="Kozono D."/>
            <person name="Guggino W.B."/>
            <person name="Agre P."/>
            <person name="Yasui M."/>
        </authorList>
    </citation>
    <scope>FUNCTION</scope>
    <scope>TRANSPORTER ACTIVITY</scope>
</reference>
<reference key="4">
    <citation type="journal article" date="2002" name="J. Biol. Chem.">
        <title>Characterization of aquaporin-6 as a nitrate channel in mammalian cells. Requirement of pore-lining residue threonine 63.</title>
        <authorList>
            <person name="Ikeda M."/>
            <person name="Beitz E."/>
            <person name="Kozono D."/>
            <person name="Guggino W.B."/>
            <person name="Agre P."/>
            <person name="Yasui M."/>
        </authorList>
    </citation>
    <scope>FUNCTION</scope>
    <scope>TRANSPORTER ACTIVITY</scope>
    <scope>MUTAGENESIS OF THR-63</scope>
</reference>
<reference key="5">
    <citation type="journal article" date="2013" name="Am. J. Physiol.">
        <title>Relative CO(2)/NH(3) selectivities of mammalian aquaporins 0-9.</title>
        <authorList>
            <person name="Geyer R.R."/>
            <person name="Musa-Aziz R."/>
            <person name="Qin X."/>
            <person name="Boron W.F."/>
        </authorList>
    </citation>
    <scope>FUNCTION</scope>
    <scope>TRANSPORTER ACTIVITY</scope>
    <scope>MUTAGENESIS OF ASN-60</scope>
</reference>
<accession>Q9WTY0</accession>
<organism>
    <name type="scientific">Rattus norvegicus</name>
    <name type="common">Rat</name>
    <dbReference type="NCBI Taxonomy" id="10116"/>
    <lineage>
        <taxon>Eukaryota</taxon>
        <taxon>Metazoa</taxon>
        <taxon>Chordata</taxon>
        <taxon>Craniata</taxon>
        <taxon>Vertebrata</taxon>
        <taxon>Euteleostomi</taxon>
        <taxon>Mammalia</taxon>
        <taxon>Eutheria</taxon>
        <taxon>Euarchontoglires</taxon>
        <taxon>Glires</taxon>
        <taxon>Rodentia</taxon>
        <taxon>Myomorpha</taxon>
        <taxon>Muroidea</taxon>
        <taxon>Muridae</taxon>
        <taxon>Murinae</taxon>
        <taxon>Rattus</taxon>
    </lineage>
</organism>
<protein>
    <recommendedName>
        <fullName evidence="9">Aquaporin-6</fullName>
        <shortName>AQP-6</shortName>
    </recommendedName>
</protein>
<gene>
    <name evidence="15" type="primary">Aqp6</name>
</gene>
<keyword id="KW-0968">Cytoplasmic vesicle</keyword>
<keyword id="KW-0325">Glycoprotein</keyword>
<keyword id="KW-0472">Membrane</keyword>
<keyword id="KW-1185">Reference proteome</keyword>
<keyword id="KW-0677">Repeat</keyword>
<keyword id="KW-0812">Transmembrane</keyword>
<keyword id="KW-1133">Transmembrane helix</keyword>
<keyword id="KW-0813">Transport</keyword>
<evidence type="ECO:0000250" key="1">
    <source>
        <dbReference type="UniProtKB" id="P41181"/>
    </source>
</evidence>
<evidence type="ECO:0000250" key="2">
    <source>
        <dbReference type="UniProtKB" id="P55064"/>
    </source>
</evidence>
<evidence type="ECO:0000255" key="3"/>
<evidence type="ECO:0000269" key="4">
    <source>
    </source>
</evidence>
<evidence type="ECO:0000269" key="5">
    <source>
    </source>
</evidence>
<evidence type="ECO:0000269" key="6">
    <source>
    </source>
</evidence>
<evidence type="ECO:0000269" key="7">
    <source>
    </source>
</evidence>
<evidence type="ECO:0000269" key="8">
    <source>
    </source>
</evidence>
<evidence type="ECO:0000303" key="9">
    <source>
    </source>
</evidence>
<evidence type="ECO:0000305" key="10"/>
<evidence type="ECO:0000305" key="11">
    <source>
    </source>
</evidence>
<evidence type="ECO:0000305" key="12">
    <source>
    </source>
</evidence>
<evidence type="ECO:0000305" key="13">
    <source>
    </source>
</evidence>
<evidence type="ECO:0000305" key="14">
    <source>
    </source>
</evidence>
<evidence type="ECO:0000312" key="15">
    <source>
        <dbReference type="RGD" id="71100"/>
    </source>
</evidence>